<organism>
    <name type="scientific">Rotavirus A (strain RVA/Human/Japan/KU/1995/G1P1A[8])</name>
    <name type="common">RV-A</name>
    <dbReference type="NCBI Taxonomy" id="10952"/>
    <lineage>
        <taxon>Viruses</taxon>
        <taxon>Riboviria</taxon>
        <taxon>Orthornavirae</taxon>
        <taxon>Duplornaviricota</taxon>
        <taxon>Resentoviricetes</taxon>
        <taxon>Reovirales</taxon>
        <taxon>Sedoreoviridae</taxon>
        <taxon>Rotavirus</taxon>
        <taxon>Rotavirus A</taxon>
    </lineage>
</organism>
<organismHost>
    <name type="scientific">Homo sapiens</name>
    <name type="common">Human</name>
    <dbReference type="NCBI Taxonomy" id="9606"/>
</organismHost>
<proteinExistence type="evidence at transcript level"/>
<name>VP6_ROTHK</name>
<reference key="1">
    <citation type="submission" date="1999-01" db="EMBL/GenBank/DDBJ databases">
        <authorList>
            <person name="Taniguchi K."/>
        </authorList>
    </citation>
    <scope>NUCLEOTIDE SEQUENCE [MRNA]</scope>
</reference>
<evidence type="ECO:0000255" key="1">
    <source>
        <dbReference type="HAMAP-Rule" id="MF_04129"/>
    </source>
</evidence>
<feature type="chain" id="PRO_0000368176" description="Intermediate capsid protein VP6">
    <location>
        <begin position="1"/>
        <end position="397"/>
    </location>
</feature>
<feature type="region of interest" description="Interaction with the inner capsid protein VP2" evidence="1">
    <location>
        <begin position="62"/>
        <end position="73"/>
    </location>
</feature>
<feature type="binding site" evidence="1">
    <location>
        <position position="153"/>
    </location>
    <ligand>
        <name>Zn(2+)</name>
        <dbReference type="ChEBI" id="CHEBI:29105"/>
        <note>ligand shared between all trimeric partners</note>
    </ligand>
</feature>
<feature type="binding site" evidence="1">
    <location>
        <position position="266"/>
    </location>
    <ligand>
        <name>Ca(2+)</name>
        <dbReference type="ChEBI" id="CHEBI:29108"/>
    </ligand>
</feature>
<feature type="binding site" evidence="1">
    <location>
        <position position="286"/>
    </location>
    <ligand>
        <name>Ca(2+)</name>
        <dbReference type="ChEBI" id="CHEBI:29108"/>
    </ligand>
</feature>
<sequence>MEVLYSLSKTLKDARDKIVEGTLYSNVSDLIQQFNQMIVTMNGNDFQTGGIGNLPIRNWTFDFGLLGTTLLNLDANYVENARTTIEYFIDFIDNVCMDEMAREAQRNGVAPQSEALGKLAGIKFKRINFDNSSEYIENWNLQNRRQRTGFVFHKPNIFPYSASFTLNRSQPMHDNLMGTMWLNAGSEIQVAGFDYSCAINAPANIQQFEHIVQLRRALTTATITLLPDAERFSFPRVINSADGATTWFFNPVILRPNNVEVEFLLNGQIINTYQARFGTIIARNFDTIRSLFQLMRPPNMTPAVNALFPQAQPFQHHATVGLTLRIESAVCESVLADANETLLANVTAVRQEYAIPVGPVFPPGMNWTELITNYSPSREDNLQRVFTVASIRSMLIK</sequence>
<protein>
    <recommendedName>
        <fullName evidence="1">Intermediate capsid protein VP6</fullName>
    </recommendedName>
</protein>
<comment type="function">
    <text evidence="1">Intermediate capsid protein that self assembles to form an icosahedral capsid with a T=13 symmetry, which consists of 230 trimers of VP6, with channels at each of its five-fold vertices. This capsid constitutes the middle concentric layer of the viral mature particle. The innermost VP2 capsid and the intermediate VP6 capsid remain intact following cell entry to protect the dsRNA from degradation and to prevent unfavorable antiviral responses in the host cell during all the replication cycle of the virus. Nascent transcripts are transcribed within the structural confines of this double-layered particle (DLP) and are extruded through the channels at the five-fold axes. VP6 is required for the transcription activity of the DLP.</text>
</comment>
<comment type="subunit">
    <text evidence="1">Homotrimer. Interacts with the inner capsid protein VP2. Interacts with the outer capsid glycoprotein VP7. Interacts with the outer capsid protein VP5*.</text>
</comment>
<comment type="subcellular location">
    <subcellularLocation>
        <location evidence="1">Virion</location>
    </subcellularLocation>
    <text evidence="1">Component of the intermediate capsid. Also found in spherical cytoplasmic structures, called virus factories, that appear early after infection and are the site of viral replication and packaging.</text>
</comment>
<comment type="PTM">
    <text evidence="1">The N-terminus is blocked.</text>
</comment>
<comment type="PTM">
    <text evidence="1">Sumoylated with SUMO1 and SUMO2. Sumoylation of viral proteins seems to have a positive role on viral replication.</text>
</comment>
<comment type="miscellaneous">
    <text evidence="1">The VP6 trimer contains a zinc ion located at the center of the molecule. The zinc ion is not essential for either trimerization or transcription activity of the DLP. Zinc-depleted VP6 has an increased sensitivity to proteases.</text>
</comment>
<comment type="similarity">
    <text evidence="1">Belongs to the rotavirus VP6 family.</text>
</comment>
<keyword id="KW-0106">Calcium</keyword>
<keyword id="KW-0167">Capsid protein</keyword>
<keyword id="KW-1154">Intermediate capsid protein</keyword>
<keyword id="KW-0479">Metal-binding</keyword>
<keyword id="KW-0832">Ubl conjugation</keyword>
<keyword id="KW-0946">Virion</keyword>
<keyword id="KW-0862">Zinc</keyword>
<accession>Q9QNB0</accession>
<dbReference type="EMBL" id="AB022768">
    <property type="protein sequence ID" value="BAA84965.1"/>
    <property type="molecule type" value="mRNA"/>
</dbReference>
<dbReference type="SMR" id="Q9QNB0"/>
<dbReference type="Proteomes" id="UP000001458">
    <property type="component" value="Genome"/>
</dbReference>
<dbReference type="GO" id="GO:0019031">
    <property type="term" value="C:viral envelope"/>
    <property type="evidence" value="ECO:0007669"/>
    <property type="project" value="UniProtKB-UniRule"/>
</dbReference>
<dbReference type="GO" id="GO:0039626">
    <property type="term" value="C:viral intermediate capsid"/>
    <property type="evidence" value="ECO:0007669"/>
    <property type="project" value="UniProtKB-UniRule"/>
</dbReference>
<dbReference type="GO" id="GO:0046789">
    <property type="term" value="F:host cell surface receptor binding"/>
    <property type="evidence" value="ECO:0007669"/>
    <property type="project" value="UniProtKB-UniRule"/>
</dbReference>
<dbReference type="GO" id="GO:0046872">
    <property type="term" value="F:metal ion binding"/>
    <property type="evidence" value="ECO:0007669"/>
    <property type="project" value="UniProtKB-UniRule"/>
</dbReference>
<dbReference type="GO" id="GO:0005198">
    <property type="term" value="F:structural molecule activity"/>
    <property type="evidence" value="ECO:0007669"/>
    <property type="project" value="UniProtKB-UniRule"/>
</dbReference>
<dbReference type="GO" id="GO:0019064">
    <property type="term" value="P:fusion of virus membrane with host plasma membrane"/>
    <property type="evidence" value="ECO:0007669"/>
    <property type="project" value="UniProtKB-UniRule"/>
</dbReference>
<dbReference type="FunFam" id="2.60.120.170:FF:000001">
    <property type="entry name" value="Intermediate capsid protein VP6"/>
    <property type="match status" value="1"/>
</dbReference>
<dbReference type="Gene3D" id="2.60.120.170">
    <property type="match status" value="1"/>
</dbReference>
<dbReference type="Gene3D" id="1.10.1350.10">
    <property type="entry name" value="Viral capsid alpha domain"/>
    <property type="match status" value="1"/>
</dbReference>
<dbReference type="HAMAP" id="MF_04126">
    <property type="entry name" value="Rota_VP6"/>
    <property type="match status" value="1"/>
</dbReference>
<dbReference type="HAMAP" id="MF_04129">
    <property type="entry name" value="Rota_VP6_A"/>
    <property type="match status" value="1"/>
</dbReference>
<dbReference type="InterPro" id="IPR008980">
    <property type="entry name" value="Capsid_hemagglutn"/>
</dbReference>
<dbReference type="InterPro" id="IPR001385">
    <property type="entry name" value="Rotavirus_A/C_VP6"/>
</dbReference>
<dbReference type="InterPro" id="IPR008935">
    <property type="entry name" value="Virus_capsid_a-hlx_vir"/>
</dbReference>
<dbReference type="Pfam" id="PF00980">
    <property type="entry name" value="Rota_Capsid_VP6"/>
    <property type="match status" value="1"/>
</dbReference>
<dbReference type="SUPFAM" id="SSF48345">
    <property type="entry name" value="A virus capsid protein alpha-helical domain"/>
    <property type="match status" value="1"/>
</dbReference>
<dbReference type="SUPFAM" id="SSF49818">
    <property type="entry name" value="Viral protein domain"/>
    <property type="match status" value="1"/>
</dbReference>